<proteinExistence type="inferred from homology"/>
<feature type="chain" id="PRO_1000092832" description="Heat-inducible transcription repressor HrcA">
    <location>
        <begin position="1"/>
        <end position="344"/>
    </location>
</feature>
<sequence>MVTERQQDILNLIIDIFTKTHEPVGSKALQESINSSSATIRNDMAELEKQGLLEKAHTSSGRMPSVAGFQYYVKHSLDFDRLAENEVYEIVKAFDQEFFKLEDILQEAANLLTDLSGCTVVALDVEPSRQRLTAFDIVVLGQHTALAVFTLDESRTVTSQFLIPRNFLQEDLLKLKSIIQERFLGHTVLDIHYKIRTEIPQIIQRYFTTTDNVIDLFEHIFKEMFNENIVMAGKVHLLNFANLAAYQFFDQPQKVALEIREGLREDQMQNVRVADGQESCLADLAVISSKFLIPYRGVGILAIIGPVNLDYQQLINQVNVVNRVLTMKLTDFYRYLSSNHYEVH</sequence>
<dbReference type="EMBL" id="CP001015">
    <property type="protein sequence ID" value="ACF55413.1"/>
    <property type="molecule type" value="Genomic_DNA"/>
</dbReference>
<dbReference type="SMR" id="B5E230"/>
<dbReference type="KEGG" id="spx:SPG_0466"/>
<dbReference type="HOGENOM" id="CLU_050019_1_0_9"/>
<dbReference type="GO" id="GO:0003677">
    <property type="term" value="F:DNA binding"/>
    <property type="evidence" value="ECO:0007669"/>
    <property type="project" value="InterPro"/>
</dbReference>
<dbReference type="GO" id="GO:0045892">
    <property type="term" value="P:negative regulation of DNA-templated transcription"/>
    <property type="evidence" value="ECO:0007669"/>
    <property type="project" value="UniProtKB-UniRule"/>
</dbReference>
<dbReference type="Gene3D" id="3.30.450.40">
    <property type="match status" value="1"/>
</dbReference>
<dbReference type="Gene3D" id="3.30.390.60">
    <property type="entry name" value="Heat-inducible transcription repressor hrca homolog, domain 3"/>
    <property type="match status" value="1"/>
</dbReference>
<dbReference type="Gene3D" id="1.10.10.10">
    <property type="entry name" value="Winged helix-like DNA-binding domain superfamily/Winged helix DNA-binding domain"/>
    <property type="match status" value="1"/>
</dbReference>
<dbReference type="HAMAP" id="MF_00081">
    <property type="entry name" value="HrcA"/>
    <property type="match status" value="1"/>
</dbReference>
<dbReference type="InterPro" id="IPR029016">
    <property type="entry name" value="GAF-like_dom_sf"/>
</dbReference>
<dbReference type="InterPro" id="IPR002571">
    <property type="entry name" value="HrcA"/>
</dbReference>
<dbReference type="InterPro" id="IPR021153">
    <property type="entry name" value="HrcA_C"/>
</dbReference>
<dbReference type="InterPro" id="IPR036388">
    <property type="entry name" value="WH-like_DNA-bd_sf"/>
</dbReference>
<dbReference type="InterPro" id="IPR036390">
    <property type="entry name" value="WH_DNA-bd_sf"/>
</dbReference>
<dbReference type="InterPro" id="IPR005104">
    <property type="entry name" value="WHTH_HrcA_DNA-bd"/>
</dbReference>
<dbReference type="InterPro" id="IPR023120">
    <property type="entry name" value="WHTH_transcript_rep_HrcA_IDD"/>
</dbReference>
<dbReference type="NCBIfam" id="TIGR00331">
    <property type="entry name" value="hrcA"/>
    <property type="match status" value="1"/>
</dbReference>
<dbReference type="PANTHER" id="PTHR34824">
    <property type="entry name" value="HEAT-INDUCIBLE TRANSCRIPTION REPRESSOR HRCA"/>
    <property type="match status" value="1"/>
</dbReference>
<dbReference type="PANTHER" id="PTHR34824:SF1">
    <property type="entry name" value="HEAT-INDUCIBLE TRANSCRIPTION REPRESSOR HRCA"/>
    <property type="match status" value="1"/>
</dbReference>
<dbReference type="Pfam" id="PF01628">
    <property type="entry name" value="HrcA"/>
    <property type="match status" value="1"/>
</dbReference>
<dbReference type="Pfam" id="PF03444">
    <property type="entry name" value="HrcA_DNA-bdg"/>
    <property type="match status" value="1"/>
</dbReference>
<dbReference type="PIRSF" id="PIRSF005485">
    <property type="entry name" value="HrcA"/>
    <property type="match status" value="1"/>
</dbReference>
<dbReference type="SUPFAM" id="SSF55781">
    <property type="entry name" value="GAF domain-like"/>
    <property type="match status" value="1"/>
</dbReference>
<dbReference type="SUPFAM" id="SSF46785">
    <property type="entry name" value="Winged helix' DNA-binding domain"/>
    <property type="match status" value="1"/>
</dbReference>
<evidence type="ECO:0000255" key="1">
    <source>
        <dbReference type="HAMAP-Rule" id="MF_00081"/>
    </source>
</evidence>
<gene>
    <name evidence="1" type="primary">hrcA</name>
    <name type="ordered locus">SPG_0466</name>
</gene>
<reference key="1">
    <citation type="journal article" date="2001" name="Microb. Drug Resist.">
        <title>Annotated draft genomic sequence from a Streptococcus pneumoniae type 19F clinical isolate.</title>
        <authorList>
            <person name="Dopazo J."/>
            <person name="Mendoza A."/>
            <person name="Herrero J."/>
            <person name="Caldara F."/>
            <person name="Humbert Y."/>
            <person name="Friedli L."/>
            <person name="Guerrier M."/>
            <person name="Grand-Schenk E."/>
            <person name="Gandin C."/>
            <person name="de Francesco M."/>
            <person name="Polissi A."/>
            <person name="Buell G."/>
            <person name="Feger G."/>
            <person name="Garcia E."/>
            <person name="Peitsch M."/>
            <person name="Garcia-Bustos J.F."/>
        </authorList>
    </citation>
    <scope>NUCLEOTIDE SEQUENCE [LARGE SCALE GENOMIC DNA]</scope>
    <source>
        <strain>G54</strain>
    </source>
</reference>
<reference key="2">
    <citation type="submission" date="2008-03" db="EMBL/GenBank/DDBJ databases">
        <title>Pneumococcal beta glucoside metabolism investigated by whole genome comparison.</title>
        <authorList>
            <person name="Mulas L."/>
            <person name="Trappetti C."/>
            <person name="Hakenbeck R."/>
            <person name="Iannelli F."/>
            <person name="Pozzi G."/>
            <person name="Davidsen T.M."/>
            <person name="Tettelin H."/>
            <person name="Oggioni M."/>
        </authorList>
    </citation>
    <scope>NUCLEOTIDE SEQUENCE [LARGE SCALE GENOMIC DNA]</scope>
    <source>
        <strain>G54</strain>
    </source>
</reference>
<keyword id="KW-0678">Repressor</keyword>
<keyword id="KW-0346">Stress response</keyword>
<keyword id="KW-0804">Transcription</keyword>
<keyword id="KW-0805">Transcription regulation</keyword>
<name>HRCA_STRP4</name>
<accession>B5E230</accession>
<protein>
    <recommendedName>
        <fullName evidence="1">Heat-inducible transcription repressor HrcA</fullName>
    </recommendedName>
</protein>
<organism>
    <name type="scientific">Streptococcus pneumoniae serotype 19F (strain G54)</name>
    <dbReference type="NCBI Taxonomy" id="512566"/>
    <lineage>
        <taxon>Bacteria</taxon>
        <taxon>Bacillati</taxon>
        <taxon>Bacillota</taxon>
        <taxon>Bacilli</taxon>
        <taxon>Lactobacillales</taxon>
        <taxon>Streptococcaceae</taxon>
        <taxon>Streptococcus</taxon>
    </lineage>
</organism>
<comment type="function">
    <text evidence="1">Negative regulator of class I heat shock genes (grpE-dnaK-dnaJ and groELS operons). Prevents heat-shock induction of these operons.</text>
</comment>
<comment type="similarity">
    <text evidence="1">Belongs to the HrcA family.</text>
</comment>